<comment type="function">
    <text evidence="1">Component of the Mediator complex, a coactivator involved in the regulated transcription of nearly all RNA polymerase II-dependent genes. Mediator functions as a bridge to convey information from gene-specific regulatory proteins to the basal RNA polymerase II transcription machinery. Mediator is recruited to promoters by direct interactions with regulatory proteins and serves as a scaffold for the assembly of a functional preinitiation complex with RNA polymerase II and the general transcription factors (By similarity).</text>
</comment>
<comment type="subunit">
    <text evidence="1">Component of the Mediator complex, which is composed of MED1, MED4, MED6, MED7, MED8, MED9, MED10, MED11, MED12, MED13, MED13L, MED14, MED15, MED16, MED17, MED18, MED19, MED20, MED21, MED22, MED23, MED24, MED25, MED26, MED27, MED29, MED30, MED31, CCNC, CDK8 and CDC2L6/CDK11. The MED12, MED13, CCNC and CDK8 subunits form a distinct module termed the CDK8 module. Mediator containing the CDK8 module is less active than Mediator lacking this module in supporting transcriptional activation. Individual preparations of the Mediator complex lacking one or more distinct subunits have been variously termed ARC, CRSP, DRIP, PC2, SMCC and TRAP. Interacts with PPARG. Interacts with THRA in a ligand-dependent fashion (By similarity).</text>
</comment>
<comment type="subcellular location">
    <subcellularLocation>
        <location evidence="2">Nucleus</location>
    </subcellularLocation>
</comment>
<comment type="similarity">
    <text evidence="2">Belongs to the Mediator complex subunit 21 family.</text>
</comment>
<gene>
    <name type="primary">MED21</name>
    <name type="synonym">SURB7</name>
</gene>
<reference key="1">
    <citation type="submission" date="2005-11" db="EMBL/GenBank/DDBJ databases">
        <authorList>
            <consortium name="NIH - Mammalian Gene Collection (MGC) project"/>
        </authorList>
    </citation>
    <scope>NUCLEOTIDE SEQUENCE [LARGE SCALE MRNA]</scope>
    <source>
        <strain>Crossbred X Angus</strain>
        <tissue>Liver</tissue>
    </source>
</reference>
<dbReference type="EMBL" id="BC109636">
    <property type="protein sequence ID" value="AAI09637.1"/>
    <property type="molecule type" value="mRNA"/>
</dbReference>
<dbReference type="RefSeq" id="NP_001033655.1">
    <property type="nucleotide sequence ID" value="NM_001038566.1"/>
</dbReference>
<dbReference type="SMR" id="Q2TBU8"/>
<dbReference type="FunCoup" id="Q2TBU8">
    <property type="interactions" value="3460"/>
</dbReference>
<dbReference type="STRING" id="9913.ENSBTAP00000074342"/>
<dbReference type="PaxDb" id="9913-ENSBTAP00000006696"/>
<dbReference type="GeneID" id="539496"/>
<dbReference type="KEGG" id="bta:539496"/>
<dbReference type="CTD" id="9412"/>
<dbReference type="VEuPathDB" id="HostDB:ENSBTAG00000005082"/>
<dbReference type="eggNOG" id="KOG1510">
    <property type="taxonomic scope" value="Eukaryota"/>
</dbReference>
<dbReference type="HOGENOM" id="CLU_126757_0_0_1"/>
<dbReference type="InParanoid" id="Q2TBU8"/>
<dbReference type="OMA" id="DSFPIEA"/>
<dbReference type="OrthoDB" id="526653at2759"/>
<dbReference type="Proteomes" id="UP000009136">
    <property type="component" value="Chromosome 5"/>
</dbReference>
<dbReference type="Bgee" id="ENSBTAG00000005082">
    <property type="expression patterns" value="Expressed in oocyte and 109 other cell types or tissues"/>
</dbReference>
<dbReference type="GO" id="GO:0016592">
    <property type="term" value="C:mediator complex"/>
    <property type="evidence" value="ECO:0000318"/>
    <property type="project" value="GO_Central"/>
</dbReference>
<dbReference type="GO" id="GO:0003712">
    <property type="term" value="F:transcription coregulator activity"/>
    <property type="evidence" value="ECO:0000318"/>
    <property type="project" value="GO_Central"/>
</dbReference>
<dbReference type="GO" id="GO:0006357">
    <property type="term" value="P:regulation of transcription by RNA polymerase II"/>
    <property type="evidence" value="ECO:0000318"/>
    <property type="project" value="GO_Central"/>
</dbReference>
<dbReference type="Gene3D" id="6.10.280.10">
    <property type="entry name" value="Mediator complex, subunit Med21"/>
    <property type="match status" value="1"/>
</dbReference>
<dbReference type="InterPro" id="IPR037212">
    <property type="entry name" value="Med7/Med21-like"/>
</dbReference>
<dbReference type="InterPro" id="IPR021384">
    <property type="entry name" value="Mediator_Med21"/>
</dbReference>
<dbReference type="PANTHER" id="PTHR13381:SF0">
    <property type="entry name" value="MEDIATOR OF RNA POLYMERASE II TRANSCRIPTION SUBUNIT 21"/>
    <property type="match status" value="1"/>
</dbReference>
<dbReference type="PANTHER" id="PTHR13381">
    <property type="entry name" value="RNA POLYMERASE II HOLOENZYME COMPONENT SRB7"/>
    <property type="match status" value="1"/>
</dbReference>
<dbReference type="Pfam" id="PF11221">
    <property type="entry name" value="Med21"/>
    <property type="match status" value="1"/>
</dbReference>
<dbReference type="SUPFAM" id="SSF140718">
    <property type="entry name" value="Mediator hinge subcomplex-like"/>
    <property type="match status" value="1"/>
</dbReference>
<evidence type="ECO:0000250" key="1"/>
<evidence type="ECO:0000305" key="2"/>
<sequence length="144" mass="15521">MADRLTQLQDAVNSLADQFCNAIGVLQQCGPPASFSNIQTAINKDQPANPTEEYAQLFAALIARTAKDIDVLIDSLPSEESTAALQAASLYKLEEENHEAATSLEDVVYRGDMLLEKIQSALADIAQSQLKTRSGTHSQSLPDS</sequence>
<accession>Q2TBU8</accession>
<protein>
    <recommendedName>
        <fullName>Mediator of RNA polymerase II transcription subunit 21</fullName>
    </recommendedName>
    <alternativeName>
        <fullName>Mediator complex subunit 21</fullName>
    </alternativeName>
    <alternativeName>
        <fullName>RNA polymerase II holoenzyme component SRB7</fullName>
        <shortName>RNAPII complex component SRB7</shortName>
    </alternativeName>
</protein>
<name>MED21_BOVIN</name>
<proteinExistence type="evidence at transcript level"/>
<feature type="chain" id="PRO_0000305945" description="Mediator of RNA polymerase II transcription subunit 21">
    <location>
        <begin position="1"/>
        <end position="144"/>
    </location>
</feature>
<organism>
    <name type="scientific">Bos taurus</name>
    <name type="common">Bovine</name>
    <dbReference type="NCBI Taxonomy" id="9913"/>
    <lineage>
        <taxon>Eukaryota</taxon>
        <taxon>Metazoa</taxon>
        <taxon>Chordata</taxon>
        <taxon>Craniata</taxon>
        <taxon>Vertebrata</taxon>
        <taxon>Euteleostomi</taxon>
        <taxon>Mammalia</taxon>
        <taxon>Eutheria</taxon>
        <taxon>Laurasiatheria</taxon>
        <taxon>Artiodactyla</taxon>
        <taxon>Ruminantia</taxon>
        <taxon>Pecora</taxon>
        <taxon>Bovidae</taxon>
        <taxon>Bovinae</taxon>
        <taxon>Bos</taxon>
    </lineage>
</organism>
<keyword id="KW-0010">Activator</keyword>
<keyword id="KW-0539">Nucleus</keyword>
<keyword id="KW-1185">Reference proteome</keyword>
<keyword id="KW-0804">Transcription</keyword>
<keyword id="KW-0805">Transcription regulation</keyword>